<feature type="initiator methionine" description="Removed; by host" evidence="2">
    <location>
        <position position="1"/>
    </location>
</feature>
<feature type="chain" id="PRO_0000426431" description="Genome polyprotein">
    <location>
        <begin position="2"/>
        <end position="2195"/>
    </location>
</feature>
<feature type="chain" id="PRO_0000426432" description="P1">
    <location>
        <begin position="2"/>
        <end position="861"/>
    </location>
</feature>
<feature type="chain" id="PRO_0000426433" description="Capsid protein VP0">
    <location>
        <begin position="2"/>
        <end position="331"/>
    </location>
</feature>
<feature type="chain" id="PRO_0000426434" description="Capsid protein VP4">
    <location>
        <begin position="2"/>
        <end position="69"/>
    </location>
</feature>
<feature type="chain" id="PRO_0000426435" description="Capsid protein VP2">
    <location>
        <begin position="70"/>
        <end position="331"/>
    </location>
</feature>
<feature type="chain" id="PRO_0000426436" description="Capsid protein VP3">
    <location>
        <begin position="332"/>
        <end position="569"/>
    </location>
</feature>
<feature type="chain" id="PRO_0000426437" description="Capsid protein VP1">
    <location>
        <begin position="570"/>
        <end position="861"/>
    </location>
</feature>
<feature type="chain" id="PRO_0000426438" description="P2">
    <location>
        <begin position="862"/>
        <end position="1439"/>
    </location>
</feature>
<feature type="chain" id="PRO_0000426439" description="Protease 2A">
    <location>
        <begin position="862"/>
        <end position="1011"/>
    </location>
</feature>
<feature type="chain" id="PRO_0000039708" description="Protein 2B">
    <location>
        <begin position="1012"/>
        <end position="1110"/>
    </location>
</feature>
<feature type="chain" id="PRO_0000039709" description="Protein 2C">
    <location>
        <begin position="1111"/>
        <end position="1439"/>
    </location>
</feature>
<feature type="chain" id="PRO_0000426440" description="P3">
    <location>
        <begin position="1440"/>
        <end position="2195"/>
    </location>
</feature>
<feature type="chain" id="PRO_0000426441" description="Protein 3AB">
    <location>
        <begin position="1440"/>
        <end position="1550"/>
    </location>
</feature>
<feature type="chain" id="PRO_0000039710" description="Protein 3A">
    <location>
        <begin position="1440"/>
        <end position="1528"/>
    </location>
</feature>
<feature type="chain" id="PRO_0000426442" description="Viral protein genome-linked">
    <location>
        <begin position="1529"/>
        <end position="1550"/>
    </location>
</feature>
<feature type="chain" id="PRO_0000426443" description="Protein 3CD">
    <location>
        <begin position="1551"/>
        <end position="2195"/>
    </location>
</feature>
<feature type="chain" id="PRO_0000426444" description="Protease 3C">
    <location>
        <begin position="1551"/>
        <end position="1733"/>
    </location>
</feature>
<feature type="chain" id="PRO_0000426445" description="RNA-directed RNA polymerase">
    <location>
        <begin position="1734"/>
        <end position="2195"/>
    </location>
</feature>
<feature type="topological domain" description="Cytoplasmic" evidence="9">
    <location>
        <begin position="2"/>
        <end position="1505"/>
    </location>
</feature>
<feature type="intramembrane region" evidence="9">
    <location>
        <begin position="1506"/>
        <end position="1521"/>
    </location>
</feature>
<feature type="topological domain" description="Cytoplasmic" evidence="9">
    <location>
        <begin position="1522"/>
        <end position="2195"/>
    </location>
</feature>
<feature type="domain" description="SF3 helicase" evidence="11">
    <location>
        <begin position="1215"/>
        <end position="1371"/>
    </location>
</feature>
<feature type="domain" description="Peptidase C3" evidence="12">
    <location>
        <begin position="1551"/>
        <end position="1729"/>
    </location>
</feature>
<feature type="domain" description="RdRp catalytic" evidence="10">
    <location>
        <begin position="1960"/>
        <end position="2076"/>
    </location>
</feature>
<feature type="zinc finger region" description="C4-type; degenerate" evidence="1">
    <location>
        <begin position="1379"/>
        <end position="1396"/>
    </location>
</feature>
<feature type="region of interest" description="Amphipathic alpha-helix" evidence="9">
    <location>
        <begin position="567"/>
        <end position="583"/>
    </location>
</feature>
<feature type="region of interest" description="Oligomerization" evidence="2">
    <location>
        <begin position="1111"/>
        <end position="1249"/>
    </location>
</feature>
<feature type="region of interest" description="Membrane-binding" evidence="2">
    <location>
        <begin position="1111"/>
        <end position="1183"/>
    </location>
</feature>
<feature type="region of interest" description="RNA-binding" evidence="2">
    <location>
        <begin position="1132"/>
        <end position="1136"/>
    </location>
</feature>
<feature type="region of interest" description="RNA-binding" evidence="2">
    <location>
        <begin position="1423"/>
        <end position="1430"/>
    </location>
</feature>
<feature type="region of interest" description="Oligomerization" evidence="2">
    <location>
        <begin position="1434"/>
        <end position="1439"/>
    </location>
</feature>
<feature type="active site" description="For protease 2A activity" evidence="2">
    <location>
        <position position="882"/>
    </location>
</feature>
<feature type="active site" description="For protease 2A activity" evidence="2">
    <location>
        <position position="900"/>
    </location>
</feature>
<feature type="active site" description="For protease 2A activity" evidence="2">
    <location>
        <position position="971"/>
    </location>
</feature>
<feature type="active site" description="For protease 3C activity" evidence="12">
    <location>
        <position position="1590"/>
    </location>
</feature>
<feature type="active site" description="For protease 3C activity" evidence="12">
    <location>
        <position position="1621"/>
    </location>
</feature>
<feature type="active site" description="For protease 3C activity" evidence="12">
    <location>
        <position position="1697"/>
    </location>
</feature>
<feature type="binding site" evidence="8">
    <location>
        <position position="917"/>
    </location>
    <ligand>
        <name>Zn(2+)</name>
        <dbReference type="ChEBI" id="CHEBI:29105"/>
        <label>1</label>
        <note>structural</note>
    </ligand>
</feature>
<feature type="binding site" evidence="8">
    <location>
        <position position="919"/>
    </location>
    <ligand>
        <name>Zn(2+)</name>
        <dbReference type="ChEBI" id="CHEBI:29105"/>
        <label>1</label>
        <note>structural</note>
    </ligand>
</feature>
<feature type="binding site" evidence="8">
    <location>
        <position position="977"/>
    </location>
    <ligand>
        <name>Zn(2+)</name>
        <dbReference type="ChEBI" id="CHEBI:29105"/>
        <label>1</label>
        <note>structural</note>
    </ligand>
</feature>
<feature type="binding site" evidence="8">
    <location>
        <position position="979"/>
    </location>
    <ligand>
        <name>Zn(2+)</name>
        <dbReference type="ChEBI" id="CHEBI:29105"/>
        <label>1</label>
        <note>structural</note>
    </ligand>
</feature>
<feature type="binding site" evidence="1">
    <location>
        <position position="1379"/>
    </location>
    <ligand>
        <name>Zn(2+)</name>
        <dbReference type="ChEBI" id="CHEBI:29105"/>
        <label>2</label>
    </ligand>
</feature>
<feature type="binding site" evidence="1">
    <location>
        <position position="1391"/>
    </location>
    <ligand>
        <name>Zn(2+)</name>
        <dbReference type="ChEBI" id="CHEBI:29105"/>
        <label>2</label>
    </ligand>
</feature>
<feature type="binding site" evidence="1">
    <location>
        <position position="1396"/>
    </location>
    <ligand>
        <name>Zn(2+)</name>
        <dbReference type="ChEBI" id="CHEBI:29105"/>
        <label>2</label>
    </ligand>
</feature>
<feature type="binding site" evidence="2">
    <location>
        <position position="1966"/>
    </location>
    <ligand>
        <name>Mg(2+)</name>
        <dbReference type="ChEBI" id="CHEBI:18420"/>
        <label>1</label>
        <note>catalytic; for RdRp activity</note>
    </ligand>
</feature>
<feature type="binding site" evidence="2">
    <location>
        <position position="1966"/>
    </location>
    <ligand>
        <name>Mg(2+)</name>
        <dbReference type="ChEBI" id="CHEBI:18420"/>
        <label>2</label>
        <note>catalytic; for RdRp activity</note>
    </ligand>
</feature>
<feature type="binding site" evidence="2">
    <location>
        <position position="2062"/>
    </location>
    <ligand>
        <name>Mg(2+)</name>
        <dbReference type="ChEBI" id="CHEBI:18420"/>
        <label>1</label>
        <note>catalytic; for RdRp activity</note>
    </ligand>
</feature>
<feature type="binding site" evidence="2">
    <location>
        <position position="2062"/>
    </location>
    <ligand>
        <name>Mg(2+)</name>
        <dbReference type="ChEBI" id="CHEBI:18420"/>
        <label>2</label>
        <note>catalytic; for RdRp activity</note>
    </ligand>
</feature>
<feature type="site" description="Cleavage; by autolysis" evidence="2">
    <location>
        <begin position="69"/>
        <end position="70"/>
    </location>
</feature>
<feature type="site" description="Cleavage; by protease 3C" evidence="3">
    <location>
        <begin position="331"/>
        <end position="332"/>
    </location>
</feature>
<feature type="site" description="Cleavage; by autolysis" evidence="3">
    <location>
        <begin position="861"/>
        <end position="862"/>
    </location>
</feature>
<feature type="site" description="Cleavage; by protease 3C" evidence="3">
    <location>
        <begin position="1011"/>
        <end position="1012"/>
    </location>
</feature>
<feature type="site" description="Cleavage; by protease 3C" evidence="3">
    <location>
        <begin position="1110"/>
        <end position="1111"/>
    </location>
</feature>
<feature type="site" description="Involved in the interaction with host RTN3" evidence="7">
    <location>
        <position position="1135"/>
    </location>
</feature>
<feature type="site" description="Cleavage; by protease 3C" evidence="3">
    <location>
        <begin position="1439"/>
        <end position="1440"/>
    </location>
</feature>
<feature type="site" description="Cleavage; by protease 3C" evidence="3">
    <location>
        <begin position="1528"/>
        <end position="1529"/>
    </location>
</feature>
<feature type="site" description="Cleavage; by protease 3C" evidence="3">
    <location>
        <begin position="1550"/>
        <end position="1551"/>
    </location>
</feature>
<feature type="site" description="Cleavage; by protease 3C" evidence="3">
    <location>
        <begin position="1733"/>
        <end position="1734"/>
    </location>
</feature>
<feature type="modified residue" description="O-(5'-phospho-RNA)-tyrosine" evidence="2">
    <location>
        <position position="1531"/>
    </location>
</feature>
<feature type="lipid moiety-binding region" description="N-myristoyl glycine; by host" evidence="2">
    <location>
        <position position="2"/>
    </location>
</feature>
<feature type="sequence conflict" description="In Ref. 2; BAA01439." evidence="13" ref="2">
    <original>RLCQY</original>
    <variation>SYANT</variation>
    <location>
        <begin position="823"/>
        <end position="827"/>
    </location>
</feature>
<protein>
    <recommendedName>
        <fullName>Genome polyprotein</fullName>
    </recommendedName>
    <component>
        <recommendedName>
            <fullName>P1</fullName>
        </recommendedName>
    </component>
    <component>
        <recommendedName>
            <fullName>Capsid protein VP0</fullName>
        </recommendedName>
        <alternativeName>
            <fullName>VP4-VP2</fullName>
        </alternativeName>
    </component>
    <component>
        <recommendedName>
            <fullName>Capsid protein VP4</fullName>
        </recommendedName>
        <alternativeName>
            <fullName>P1A</fullName>
        </alternativeName>
        <alternativeName>
            <fullName>Virion protein 4</fullName>
        </alternativeName>
    </component>
    <component>
        <recommendedName>
            <fullName>Capsid protein VP2</fullName>
        </recommendedName>
        <alternativeName>
            <fullName>P1B</fullName>
        </alternativeName>
        <alternativeName>
            <fullName>Virion protein 2</fullName>
        </alternativeName>
    </component>
    <component>
        <recommendedName>
            <fullName>Capsid protein VP3</fullName>
        </recommendedName>
        <alternativeName>
            <fullName>P1C</fullName>
        </alternativeName>
        <alternativeName>
            <fullName>Virion protein 3</fullName>
        </alternativeName>
    </component>
    <component>
        <recommendedName>
            <fullName>Capsid protein VP1</fullName>
        </recommendedName>
        <alternativeName>
            <fullName>P1D</fullName>
        </alternativeName>
        <alternativeName>
            <fullName>Virion protein 1</fullName>
        </alternativeName>
    </component>
    <component>
        <recommendedName>
            <fullName>P2</fullName>
        </recommendedName>
    </component>
    <component>
        <recommendedName>
            <fullName>Protease 2A</fullName>
            <shortName>P2A</shortName>
            <ecNumber evidence="2">3.4.22.29</ecNumber>
        </recommendedName>
        <alternativeName>
            <fullName>Picornain 2A</fullName>
        </alternativeName>
        <alternativeName>
            <fullName>Protein 2A</fullName>
        </alternativeName>
    </component>
    <component>
        <recommendedName>
            <fullName>Protein 2B</fullName>
            <shortName>P2B</shortName>
        </recommendedName>
    </component>
    <component>
        <recommendedName>
            <fullName>Protein 2C</fullName>
            <shortName>P2C</shortName>
            <ecNumber evidence="2">3.6.1.15</ecNumber>
        </recommendedName>
    </component>
    <component>
        <recommendedName>
            <fullName>P3</fullName>
        </recommendedName>
    </component>
    <component>
        <recommendedName>
            <fullName>Protein 3AB</fullName>
        </recommendedName>
    </component>
    <component>
        <recommendedName>
            <fullName>Protein 3A</fullName>
            <shortName>P3A</shortName>
        </recommendedName>
    </component>
    <component>
        <recommendedName>
            <fullName>Viral protein genome-linked</fullName>
            <shortName>VPg</shortName>
        </recommendedName>
        <alternativeName>
            <fullName>Protein 3B</fullName>
            <shortName>P3B</shortName>
        </alternativeName>
    </component>
    <component>
        <recommendedName>
            <fullName>Protein 3CD</fullName>
            <ecNumber>3.4.22.28</ecNumber>
        </recommendedName>
    </component>
    <component>
        <recommendedName>
            <fullName evidence="12">Protease 3C</fullName>
            <ecNumber evidence="12">3.4.22.28</ecNumber>
        </recommendedName>
        <alternativeName>
            <fullName evidence="12">Picornain 3C</fullName>
            <shortName evidence="12">P3C</shortName>
        </alternativeName>
    </component>
    <component>
        <recommendedName>
            <fullName evidence="10">RNA-directed RNA polymerase</fullName>
            <shortName>RdRp</shortName>
            <ecNumber evidence="10">2.7.7.48</ecNumber>
        </recommendedName>
        <alternativeName>
            <fullName>3D polymerase</fullName>
            <shortName>3Dpol</shortName>
        </alternativeName>
        <alternativeName>
            <fullName>Protein 3D</fullName>
            <shortName>3D</shortName>
        </alternativeName>
    </component>
</protein>
<keyword id="KW-0002">3D-structure</keyword>
<keyword id="KW-1072">Activation of host autophagy by virus</keyword>
<keyword id="KW-0067">ATP-binding</keyword>
<keyword id="KW-0068">Autocatalytic cleavage</keyword>
<keyword id="KW-0167">Capsid protein</keyword>
<keyword id="KW-0191">Covalent protein-RNA linkage</keyword>
<keyword id="KW-0235">DNA replication</keyword>
<keyword id="KW-1262">Eukaryotic host gene expression shutoff by virus</keyword>
<keyword id="KW-1193">Eukaryotic host translation shutoff by virus</keyword>
<keyword id="KW-0347">Helicase</keyword>
<keyword id="KW-1035">Host cytoplasm</keyword>
<keyword id="KW-1036">Host cytoplasmic vesicle</keyword>
<keyword id="KW-1190">Host gene expression shutoff by virus</keyword>
<keyword id="KW-1043">Host membrane</keyword>
<keyword id="KW-1192">Host mRNA suppression by virus</keyword>
<keyword id="KW-1048">Host nucleus</keyword>
<keyword id="KW-0945">Host-virus interaction</keyword>
<keyword id="KW-0378">Hydrolase</keyword>
<keyword id="KW-1090">Inhibition of host innate immune response by virus</keyword>
<keyword id="KW-1099">Inhibition of host mRNA nuclear export by virus</keyword>
<keyword id="KW-1088">Inhibition of host RIG-I by virus</keyword>
<keyword id="KW-1113">Inhibition of host RLR pathway by virus</keyword>
<keyword id="KW-0407">Ion channel</keyword>
<keyword id="KW-0406">Ion transport</keyword>
<keyword id="KW-0449">Lipoprotein</keyword>
<keyword id="KW-0460">Magnesium</keyword>
<keyword id="KW-0472">Membrane</keyword>
<keyword id="KW-0479">Metal-binding</keyword>
<keyword id="KW-0519">Myristate</keyword>
<keyword id="KW-0547">Nucleotide-binding</keyword>
<keyword id="KW-0548">Nucleotidyltransferase</keyword>
<keyword id="KW-0597">Phosphoprotein</keyword>
<keyword id="KW-1172">Pore-mediated penetration of viral genome into host cell</keyword>
<keyword id="KW-0645">Protease</keyword>
<keyword id="KW-0677">Repeat</keyword>
<keyword id="KW-0694">RNA-binding</keyword>
<keyword id="KW-0696">RNA-directed RNA polymerase</keyword>
<keyword id="KW-1143">T=pseudo3 icosahedral capsid protein</keyword>
<keyword id="KW-0788">Thiol protease</keyword>
<keyword id="KW-0808">Transferase</keyword>
<keyword id="KW-0813">Transport</keyword>
<keyword id="KW-1161">Viral attachment to host cell</keyword>
<keyword id="KW-0899">Viral immunoevasion</keyword>
<keyword id="KW-1182">Viral ion channel</keyword>
<keyword id="KW-1162">Viral penetration into host cytoplasm</keyword>
<keyword id="KW-0693">Viral RNA replication</keyword>
<keyword id="KW-0946">Virion</keyword>
<keyword id="KW-1164">Virus endocytosis by host</keyword>
<keyword id="KW-1160">Virus entry into host cell</keyword>
<keyword id="KW-0862">Zinc</keyword>
<keyword id="KW-0863">Zinc-finger</keyword>
<organism>
    <name type="scientific">Echovirus 11 (strain Gregory)</name>
    <dbReference type="NCBI Taxonomy" id="31705"/>
    <lineage>
        <taxon>Viruses</taxon>
        <taxon>Riboviria</taxon>
        <taxon>Orthornavirae</taxon>
        <taxon>Pisuviricota</taxon>
        <taxon>Pisoniviricetes</taxon>
        <taxon>Picornavirales</taxon>
        <taxon>Picornaviridae</taxon>
        <taxon>Ensavirinae</taxon>
        <taxon>Enterovirus</taxon>
        <taxon>Enterovirus B</taxon>
    </lineage>
</organism>
<organismHost>
    <name type="scientific">Homo sapiens</name>
    <name type="common">Human</name>
    <dbReference type="NCBI Taxonomy" id="9606"/>
</organismHost>
<dbReference type="EC" id="3.4.22.29" evidence="2"/>
<dbReference type="EC" id="3.6.1.15" evidence="2"/>
<dbReference type="EC" id="3.4.22.28" evidence="12"/>
<dbReference type="EC" id="2.7.7.48" evidence="10"/>
<dbReference type="EMBL" id="X80059">
    <property type="protein sequence ID" value="CAA56365.1"/>
    <property type="molecule type" value="Genomic_RNA"/>
</dbReference>
<dbReference type="EMBL" id="D10582">
    <property type="protein sequence ID" value="BAA01439.1"/>
    <property type="molecule type" value="Genomic_RNA"/>
</dbReference>
<dbReference type="PIR" id="A36642">
    <property type="entry name" value="GNNYEC"/>
</dbReference>
<dbReference type="PDB" id="2C8I">
    <property type="method" value="EM"/>
    <property type="resolution" value="14.00 A"/>
    <property type="chains" value="A=570-857, B=79-328, C=332-569, D=2-69"/>
</dbReference>
<dbReference type="PDBsum" id="2C8I"/>
<dbReference type="SMR" id="P29813"/>
<dbReference type="DrugBank" id="DB08231">
    <property type="generic name" value="Myristic acid"/>
</dbReference>
<dbReference type="MEROPS" id="C03.011"/>
<dbReference type="MEROPS" id="C03.020"/>
<dbReference type="MEROPS" id="N08.001"/>
<dbReference type="EvolutionaryTrace" id="P29813"/>
<dbReference type="Proteomes" id="UP000002684">
    <property type="component" value="Segment"/>
</dbReference>
<dbReference type="GO" id="GO:0044162">
    <property type="term" value="C:host cell cytoplasmic vesicle membrane"/>
    <property type="evidence" value="ECO:0007669"/>
    <property type="project" value="UniProtKB-SubCell"/>
</dbReference>
<dbReference type="GO" id="GO:0042025">
    <property type="term" value="C:host cell nucleus"/>
    <property type="evidence" value="ECO:0007669"/>
    <property type="project" value="UniProtKB-SubCell"/>
</dbReference>
<dbReference type="GO" id="GO:0016020">
    <property type="term" value="C:membrane"/>
    <property type="evidence" value="ECO:0007669"/>
    <property type="project" value="UniProtKB-KW"/>
</dbReference>
<dbReference type="GO" id="GO:0039618">
    <property type="term" value="C:T=pseudo3 icosahedral viral capsid"/>
    <property type="evidence" value="ECO:0007669"/>
    <property type="project" value="UniProtKB-KW"/>
</dbReference>
<dbReference type="GO" id="GO:0005524">
    <property type="term" value="F:ATP binding"/>
    <property type="evidence" value="ECO:0007669"/>
    <property type="project" value="UniProtKB-KW"/>
</dbReference>
<dbReference type="GO" id="GO:0016887">
    <property type="term" value="F:ATP hydrolysis activity"/>
    <property type="evidence" value="ECO:0007669"/>
    <property type="project" value="InterPro"/>
</dbReference>
<dbReference type="GO" id="GO:0015267">
    <property type="term" value="F:channel activity"/>
    <property type="evidence" value="ECO:0007669"/>
    <property type="project" value="UniProtKB-KW"/>
</dbReference>
<dbReference type="GO" id="GO:0004197">
    <property type="term" value="F:cysteine-type endopeptidase activity"/>
    <property type="evidence" value="ECO:0007669"/>
    <property type="project" value="UniProtKB-EC"/>
</dbReference>
<dbReference type="GO" id="GO:0003723">
    <property type="term" value="F:RNA binding"/>
    <property type="evidence" value="ECO:0007669"/>
    <property type="project" value="UniProtKB-KW"/>
</dbReference>
<dbReference type="GO" id="GO:0003724">
    <property type="term" value="F:RNA helicase activity"/>
    <property type="evidence" value="ECO:0007669"/>
    <property type="project" value="InterPro"/>
</dbReference>
<dbReference type="GO" id="GO:0003968">
    <property type="term" value="F:RNA-directed RNA polymerase activity"/>
    <property type="evidence" value="ECO:0007669"/>
    <property type="project" value="UniProtKB-KW"/>
</dbReference>
<dbReference type="GO" id="GO:0005198">
    <property type="term" value="F:structural molecule activity"/>
    <property type="evidence" value="ECO:0007669"/>
    <property type="project" value="InterPro"/>
</dbReference>
<dbReference type="GO" id="GO:0008270">
    <property type="term" value="F:zinc ion binding"/>
    <property type="evidence" value="ECO:0007669"/>
    <property type="project" value="UniProtKB-KW"/>
</dbReference>
<dbReference type="GO" id="GO:0006260">
    <property type="term" value="P:DNA replication"/>
    <property type="evidence" value="ECO:0007669"/>
    <property type="project" value="UniProtKB-KW"/>
</dbReference>
<dbReference type="GO" id="GO:0006351">
    <property type="term" value="P:DNA-templated transcription"/>
    <property type="evidence" value="ECO:0007669"/>
    <property type="project" value="InterPro"/>
</dbReference>
<dbReference type="GO" id="GO:0075509">
    <property type="term" value="P:endocytosis involved in viral entry into host cell"/>
    <property type="evidence" value="ECO:0007669"/>
    <property type="project" value="UniProtKB-KW"/>
</dbReference>
<dbReference type="GO" id="GO:0034220">
    <property type="term" value="P:monoatomic ion transmembrane transport"/>
    <property type="evidence" value="ECO:0007669"/>
    <property type="project" value="UniProtKB-KW"/>
</dbReference>
<dbReference type="GO" id="GO:0006508">
    <property type="term" value="P:proteolysis"/>
    <property type="evidence" value="ECO:0007669"/>
    <property type="project" value="UniProtKB-KW"/>
</dbReference>
<dbReference type="GO" id="GO:0044694">
    <property type="term" value="P:symbiont genome entry into host cell via pore formation in plasma membrane"/>
    <property type="evidence" value="ECO:0007669"/>
    <property type="project" value="UniProtKB-KW"/>
</dbReference>
<dbReference type="GO" id="GO:0039520">
    <property type="term" value="P:symbiont-mediated activation of host autophagy"/>
    <property type="evidence" value="ECO:0000250"/>
    <property type="project" value="UniProtKB"/>
</dbReference>
<dbReference type="GO" id="GO:0039540">
    <property type="term" value="P:symbiont-mediated suppression of host cytoplasmic pattern recognition receptor signaling pathway via inhibition of RIG-I activity"/>
    <property type="evidence" value="ECO:0007669"/>
    <property type="project" value="UniProtKB-KW"/>
</dbReference>
<dbReference type="GO" id="GO:0039522">
    <property type="term" value="P:symbiont-mediated suppression of host mRNA export from nucleus"/>
    <property type="evidence" value="ECO:0007669"/>
    <property type="project" value="UniProtKB-KW"/>
</dbReference>
<dbReference type="GO" id="GO:0039694">
    <property type="term" value="P:viral RNA genome replication"/>
    <property type="evidence" value="ECO:0007669"/>
    <property type="project" value="InterPro"/>
</dbReference>
<dbReference type="GO" id="GO:0019062">
    <property type="term" value="P:virion attachment to host cell"/>
    <property type="evidence" value="ECO:0007669"/>
    <property type="project" value="UniProtKB-KW"/>
</dbReference>
<dbReference type="CDD" id="cd23213">
    <property type="entry name" value="Enterovirus_RdRp"/>
    <property type="match status" value="1"/>
</dbReference>
<dbReference type="CDD" id="cd00205">
    <property type="entry name" value="rhv_like"/>
    <property type="match status" value="3"/>
</dbReference>
<dbReference type="FunFam" id="1.20.960.20:FF:000001">
    <property type="entry name" value="Genome polyprotein"/>
    <property type="match status" value="1"/>
</dbReference>
<dbReference type="FunFam" id="2.40.10.10:FF:000018">
    <property type="entry name" value="Genome polyprotein"/>
    <property type="match status" value="1"/>
</dbReference>
<dbReference type="FunFam" id="2.40.10.10:FF:000020">
    <property type="entry name" value="Genome polyprotein"/>
    <property type="match status" value="1"/>
</dbReference>
<dbReference type="FunFam" id="2.40.10.10:FF:000022">
    <property type="entry name" value="Genome polyprotein"/>
    <property type="match status" value="1"/>
</dbReference>
<dbReference type="FunFam" id="2.60.120.20:FF:000001">
    <property type="entry name" value="Genome polyprotein"/>
    <property type="match status" value="1"/>
</dbReference>
<dbReference type="FunFam" id="2.60.120.20:FF:000002">
    <property type="entry name" value="Genome polyprotein"/>
    <property type="match status" value="1"/>
</dbReference>
<dbReference type="FunFam" id="2.60.120.20:FF:000004">
    <property type="entry name" value="Genome polyprotein"/>
    <property type="match status" value="1"/>
</dbReference>
<dbReference type="FunFam" id="3.30.70.270:FF:000008">
    <property type="entry name" value="Genome polyprotein"/>
    <property type="match status" value="1"/>
</dbReference>
<dbReference type="FunFam" id="4.10.80.10:FF:000001">
    <property type="entry name" value="Genome polyprotein"/>
    <property type="match status" value="1"/>
</dbReference>
<dbReference type="FunFam" id="4.10.880.10:FF:000001">
    <property type="entry name" value="Genome polyprotein"/>
    <property type="match status" value="1"/>
</dbReference>
<dbReference type="FunFam" id="4.10.880.10:FF:000002">
    <property type="entry name" value="Genome polyprotein"/>
    <property type="match status" value="1"/>
</dbReference>
<dbReference type="Gene3D" id="1.20.960.20">
    <property type="match status" value="1"/>
</dbReference>
<dbReference type="Gene3D" id="2.60.120.20">
    <property type="match status" value="3"/>
</dbReference>
<dbReference type="Gene3D" id="3.30.70.270">
    <property type="match status" value="1"/>
</dbReference>
<dbReference type="Gene3D" id="4.10.80.10">
    <property type="entry name" value="Picornavirus coat protein VP4"/>
    <property type="match status" value="1"/>
</dbReference>
<dbReference type="Gene3D" id="6.10.20.20">
    <property type="entry name" value="Poliovirus 3A protein-like"/>
    <property type="match status" value="1"/>
</dbReference>
<dbReference type="Gene3D" id="4.10.880.10">
    <property type="entry name" value="Poliovirus 3D polymerase Domain 1 (Nucleotidyltransferase)"/>
    <property type="match status" value="2"/>
</dbReference>
<dbReference type="Gene3D" id="2.40.10.10">
    <property type="entry name" value="Trypsin-like serine proteases"/>
    <property type="match status" value="4"/>
</dbReference>
<dbReference type="InterPro" id="IPR003593">
    <property type="entry name" value="AAA+_ATPase"/>
</dbReference>
<dbReference type="InterPro" id="IPR043502">
    <property type="entry name" value="DNA/RNA_pol_sf"/>
</dbReference>
<dbReference type="InterPro" id="IPR000605">
    <property type="entry name" value="Helicase_SF3_ssDNA/RNA_vir"/>
</dbReference>
<dbReference type="InterPro" id="IPR014759">
    <property type="entry name" value="Helicase_SF3_ssRNA_vir"/>
</dbReference>
<dbReference type="InterPro" id="IPR027417">
    <property type="entry name" value="P-loop_NTPase"/>
</dbReference>
<dbReference type="InterPro" id="IPR014838">
    <property type="entry name" value="P3A"/>
</dbReference>
<dbReference type="InterPro" id="IPR036203">
    <property type="entry name" value="P3A_soluble_dom"/>
</dbReference>
<dbReference type="InterPro" id="IPR044067">
    <property type="entry name" value="PCV_3C_PRO"/>
</dbReference>
<dbReference type="InterPro" id="IPR000081">
    <property type="entry name" value="Peptidase_C3"/>
</dbReference>
<dbReference type="InterPro" id="IPR000199">
    <property type="entry name" value="Peptidase_C3A/C3B_picornavir"/>
</dbReference>
<dbReference type="InterPro" id="IPR009003">
    <property type="entry name" value="Peptidase_S1_PA"/>
</dbReference>
<dbReference type="InterPro" id="IPR043504">
    <property type="entry name" value="Peptidase_S1_PA_chymotrypsin"/>
</dbReference>
<dbReference type="InterPro" id="IPR003138">
    <property type="entry name" value="Pico_P1A"/>
</dbReference>
<dbReference type="InterPro" id="IPR036988">
    <property type="entry name" value="Pico_P1A_sf"/>
</dbReference>
<dbReference type="InterPro" id="IPR002527">
    <property type="entry name" value="Pico_P2B"/>
</dbReference>
<dbReference type="InterPro" id="IPR001676">
    <property type="entry name" value="Picornavirus_capsid"/>
</dbReference>
<dbReference type="InterPro" id="IPR043128">
    <property type="entry name" value="Rev_trsase/Diguanyl_cyclase"/>
</dbReference>
<dbReference type="InterPro" id="IPR033703">
    <property type="entry name" value="Rhv-like"/>
</dbReference>
<dbReference type="InterPro" id="IPR001205">
    <property type="entry name" value="RNA-dir_pol_C"/>
</dbReference>
<dbReference type="InterPro" id="IPR007094">
    <property type="entry name" value="RNA-dir_pol_PSvirus"/>
</dbReference>
<dbReference type="InterPro" id="IPR029053">
    <property type="entry name" value="Viral_coat"/>
</dbReference>
<dbReference type="Pfam" id="PF08727">
    <property type="entry name" value="P3A"/>
    <property type="match status" value="1"/>
</dbReference>
<dbReference type="Pfam" id="PF00548">
    <property type="entry name" value="Peptidase_C3"/>
    <property type="match status" value="1"/>
</dbReference>
<dbReference type="Pfam" id="PF02226">
    <property type="entry name" value="Pico_P1A"/>
    <property type="match status" value="1"/>
</dbReference>
<dbReference type="Pfam" id="PF00947">
    <property type="entry name" value="Pico_P2A"/>
    <property type="match status" value="1"/>
</dbReference>
<dbReference type="Pfam" id="PF01552">
    <property type="entry name" value="Pico_P2B"/>
    <property type="match status" value="1"/>
</dbReference>
<dbReference type="Pfam" id="PF00680">
    <property type="entry name" value="RdRP_1"/>
    <property type="match status" value="1"/>
</dbReference>
<dbReference type="Pfam" id="PF00073">
    <property type="entry name" value="Rhv"/>
    <property type="match status" value="3"/>
</dbReference>
<dbReference type="Pfam" id="PF00910">
    <property type="entry name" value="RNA_helicase"/>
    <property type="match status" value="1"/>
</dbReference>
<dbReference type="SMART" id="SM00382">
    <property type="entry name" value="AAA"/>
    <property type="match status" value="1"/>
</dbReference>
<dbReference type="SUPFAM" id="SSF56672">
    <property type="entry name" value="DNA/RNA polymerases"/>
    <property type="match status" value="1"/>
</dbReference>
<dbReference type="SUPFAM" id="SSF52540">
    <property type="entry name" value="P-loop containing nucleoside triphosphate hydrolases"/>
    <property type="match status" value="1"/>
</dbReference>
<dbReference type="SUPFAM" id="SSF88633">
    <property type="entry name" value="Positive stranded ssRNA viruses"/>
    <property type="match status" value="2"/>
</dbReference>
<dbReference type="SUPFAM" id="SSF89043">
    <property type="entry name" value="Soluble domain of poliovirus core protein 3a"/>
    <property type="match status" value="1"/>
</dbReference>
<dbReference type="SUPFAM" id="SSF50494">
    <property type="entry name" value="Trypsin-like serine proteases"/>
    <property type="match status" value="2"/>
</dbReference>
<dbReference type="PROSITE" id="PS51874">
    <property type="entry name" value="PCV_3C_PRO"/>
    <property type="match status" value="1"/>
</dbReference>
<dbReference type="PROSITE" id="PS50507">
    <property type="entry name" value="RDRP_SSRNA_POS"/>
    <property type="match status" value="1"/>
</dbReference>
<dbReference type="PROSITE" id="PS51218">
    <property type="entry name" value="SF3_HELICASE_2"/>
    <property type="match status" value="1"/>
</dbReference>
<reference key="1">
    <citation type="journal article" date="1995" name="Virus Res.">
        <title>The genome of echovirus 11.</title>
        <authorList>
            <person name="Dahllund L."/>
            <person name="Nissinen L."/>
            <person name="Pulli T."/>
            <person name="Hyttinen V.P."/>
            <person name="Stanway G."/>
            <person name="Hyypiae T."/>
        </authorList>
    </citation>
    <scope>NUCLEOTIDE SEQUENCE [GENOMIC RNA]</scope>
</reference>
<reference key="2">
    <citation type="journal article" date="1990" name="J. Gen. Virol.">
        <title>Echoviruses include genetically distinct serotypes.</title>
        <authorList>
            <person name="Auvinen P."/>
            <person name="Hyypiae T."/>
        </authorList>
    </citation>
    <scope>NUCLEOTIDE SEQUENCE [GENOMIC RNA] OF 822-2195</scope>
</reference>
<reference key="3">
    <citation type="journal article" date="1994" name="Proc. Natl. Acad. Sci. U.S.A.">
        <title>Decay-accelerating factor (CD55), a glycosylphosphatidylinositol-anchored complement regulatory protein, is a receptor for several echoviruses.</title>
        <authorList>
            <person name="Bergelson J.M."/>
            <person name="Chan M."/>
            <person name="Solomon K.R."/>
            <person name="St John N.F."/>
            <person name="Lin H."/>
            <person name="Finberg R.W."/>
        </authorList>
    </citation>
    <scope>INTERACTION WITH HOST CD55</scope>
</reference>
<reference key="4">
    <citation type="journal article" date="2019" name="Proc. Natl. Acad. Sci. U.S.A.">
        <title>The neonatal Fc receptor is a pan-echovirus receptor.</title>
        <authorList>
            <person name="Morosky S."/>
            <person name="Wells A.I."/>
            <person name="Lemon K."/>
            <person name="Evans A.S."/>
            <person name="Schamus S."/>
            <person name="Bakkenist C.J."/>
            <person name="Coyne C.B."/>
        </authorList>
    </citation>
    <scope>FUNCTION (CAPSID PROTEIN VP1)</scope>
    <scope>INTERACTION WITH HOST FCGRT (CAPSID PROTEIN VP1)</scope>
</reference>
<reference key="5">
    <citation type="journal article" date="2002" name="J. Virol.">
        <title>Determination of the structure of a decay accelerating factor-binding clinical isolate of echovirus 11 allows mapping of mutants with altered receptor requirements for infection.</title>
        <authorList>
            <person name="Stuart A.D."/>
            <person name="McKee T.A."/>
            <person name="Williams P.A."/>
            <person name="Harley C."/>
            <person name="Shen S."/>
            <person name="Stuart D.I."/>
            <person name="Brown T.D."/>
            <person name="Lea S.M."/>
        </authorList>
    </citation>
    <scope>X-RAY CRYSTALLOGRAPHY (2.9 ANGSTROMS) OF 1-859</scope>
    <source>
        <strain>Isolate clinical EV11-207</strain>
    </source>
</reference>
<proteinExistence type="evidence at protein level"/>
<name>POLG_EC11G</name>
<comment type="function">
    <molecule>Capsid protein VP1</molecule>
    <text evidence="2">Forms an icosahedral capsid of pseudo T=3 symmetry with capsid proteins VP2 and VP3 (By similarity). The capsid is 300 Angstroms in diameter, composed of 60 copies of each capsid protein and enclosing the viral positive strand RNA genome (By similarity). Capsid protein VP1 mainly forms the vertices of the capsid (By similarity). Capsid protein VP1 interacts with host cell receptor to provide virion attachment to target host cells (By similarity). This attachment induces virion internalization (By similarity). Tyrosine kinases are probably involved in the entry process (By similarity). After binding to its receptor, the capsid undergoes conformational changes (By similarity). Capsid protein VP1 N-terminus (that contains an amphipathic alpha-helix) and capsid protein VP4 are externalized (By similarity). Together, they shape a pore in the host membrane through which viral genome is translocated to host cell cytoplasm (By similarity).</text>
</comment>
<comment type="function">
    <molecule>Capsid protein VP2</molecule>
    <text evidence="2">Forms an icosahedral capsid of pseudo T=3 symmetry with capsid proteins VP2 and VP3 (By similarity). The capsid is 300 Angstroms in diameter, composed of 60 copies of each capsid protein and enclosing the viral positive strand RNA genome (By similarity).</text>
</comment>
<comment type="function">
    <molecule>Capsid protein VP3</molecule>
    <text evidence="2">Forms an icosahedral capsid of pseudo T=3 symmetry with capsid proteins VP2 and VP3 (By similarity). The capsid is 300 Angstroms in diameter, composed of 60 copies of each capsid protein and enclosing the viral positive strand RNA genome (By similarity).</text>
</comment>
<comment type="function">
    <molecule>Capsid protein VP4</molecule>
    <text evidence="2">Lies on the inner surface of the capsid shell (By similarity). After binding to the host receptor, the capsid undergoes conformational changes (By similarity). Capsid protein VP4 is released, Capsid protein VP1 N-terminus is externalized, and together, they shape a pore in the host membrane through which the viral genome is translocated into the host cell cytoplasm (By similarity).</text>
</comment>
<comment type="function">
    <molecule>Capsid protein VP0</molecule>
    <text evidence="2">Component of immature procapsids, which is cleaved into capsid proteins VP4 and VP2 after maturation (By similarity). Allows the capsid to remain inactive before the maturation step (By similarity).</text>
</comment>
<comment type="function">
    <molecule>Protease 2A</molecule>
    <text evidence="2 3">Cysteine protease that cleaves viral polyprotein and specific host proteins (By similarity). It is responsible for the autocatalytic cleavage between the P1 and P2 regions, which is the first cleavage occurring in the polyprotein (By similarity). Also cleaves the host translation initiation factor EIF4G1, in order to shut down the capped cellular mRNA translation (By similarity). Inhibits the host nucleus-cytoplasm protein and RNA trafficking by cleaving host members of the nuclear pores (By similarity). Counteracts stress granule formation probably by antagonizing its assembly or promoting its dissassembly (By similarity).</text>
</comment>
<comment type="function">
    <molecule>Protein 2B</molecule>
    <text evidence="2">Plays an essential role in the virus replication cycle by acting as a viroporin. Creates a pore in the host endoplasmic reticulum and as a consequence releases Ca2+ in the cytoplasm of infected cell. In turn, high levels of cytoplasmic calcium may trigger membrane trafficking and transport of viral ER-associated proteins to viroplasms, sites of viral genome replication.</text>
</comment>
<comment type="function">
    <molecule>Protein 2C</molecule>
    <text evidence="2">Induces and associates with structural rearrangements of intracellular membranes. Displays RNA-binding, nucleotide binding and NTPase activities. May play a role in virion morphogenesis and viral RNA encapsidation by interacting with the capsid protein VP3.</text>
</comment>
<comment type="function">
    <molecule>Protein 3AB</molecule>
    <text evidence="2">Localizes the viral replication complex to the surface of membranous vesicles. Together with protein 3CD binds the Cis-Active RNA Element (CRE) which is involved in RNA synthesis initiation. Acts as a cofactor to stimulate the activity of 3D polymerase, maybe through a nucleid acid chaperone activity.</text>
</comment>
<comment type="function">
    <molecule>Protein 3A</molecule>
    <text evidence="2">Localizes the viral replication complex to the surface of membranous vesicles (By similarity). It inhibits host cell endoplasmic reticulum-to-Golgi apparatus transport and causes the disassembly of the Golgi complex, possibly through GBF1 interaction (By similarity). This would result in depletion of MHC, trail receptors and IFN receptors at the host cell surface (By similarity). Plays an essential role in viral RNA replication by recruiting ACBD3 and PI4KB at the viral replication sites, thereby allowing the formation of the rearranged membranous structures where viral replication takes place (By similarity).</text>
</comment>
<comment type="function">
    <molecule>Viral protein genome-linked</molecule>
    <text evidence="2">Acts as a primer for viral RNA replication and remains covalently bound to viral genomic RNA. VPg is uridylylated prior to priming replication into VPg-pUpU. The oriI viral genomic sequence may act as a template for this. The VPg-pUpU is then used as primer on the genomic RNA poly(A) by the RNA-dependent RNA polymerase to replicate the viral genome. During genome replication, the VPg-RNA linkage is removed by the host TDP2, thereby accelerating replication. During the late stage of the replication cycle, host TDP2 is excluded from sites of viral RNA synthesis and encapsidation, allowing for the generation of progeny virions.</text>
</comment>
<comment type="function">
    <molecule>Protein 3CD</molecule>
    <text evidence="2">Involved in the viral replication complex and viral polypeptide maturation. It exhibits protease activity with a specificity and catalytic efficiency that is different from protease 3C. Protein 3CD lacks polymerase activity. The 3C domain in the context of protein 3CD may have an RNA binding activity. Protein 3CD binds to the 5'UTR of the viral genome.</text>
</comment>
<comment type="function">
    <molecule>RNA-directed RNA polymerase</molecule>
    <text evidence="2">Replicates the viral genomic RNA on the surface of intracellular membranes. May form linear arrays of subunits that propagate along a strong head-to-tail interaction called interface-I. Covalently attaches UMP to a tyrosine of VPg, which is used to prime RNA synthesis. The positive stranded RNA genome is first replicated at virus induced membranous vesicles, creating a dsRNA genomic replication form. This dsRNA is then used as template to synthesize positive stranded RNA genomes. ss(+)RNA genomes are either translated, replicated or encapsidated.</text>
</comment>
<comment type="function">
    <molecule>Protease 3C</molecule>
    <text evidence="2 4">Major viral protease that mediates proteolytic processing of the polyprotein (By similarity). Cleaves host EIF5B, contributing to host translation shutoff (By similarity). Also cleaves host PABPC1, contributing to host translation shutoff (By similarity). Cleaves host NLRP1, triggers host N-glycine-mediated degradation of the autoinhibitory NLRP1 N-terminal fragment (By similarity).</text>
</comment>
<comment type="catalytic activity">
    <molecule>Protein 2C</molecule>
    <reaction evidence="2">
        <text>a ribonucleoside 5'-triphosphate + H2O = a ribonucleoside 5'-diphosphate + phosphate + H(+)</text>
        <dbReference type="Rhea" id="RHEA:23680"/>
        <dbReference type="ChEBI" id="CHEBI:15377"/>
        <dbReference type="ChEBI" id="CHEBI:15378"/>
        <dbReference type="ChEBI" id="CHEBI:43474"/>
        <dbReference type="ChEBI" id="CHEBI:57930"/>
        <dbReference type="ChEBI" id="CHEBI:61557"/>
        <dbReference type="EC" id="3.6.1.15"/>
    </reaction>
</comment>
<comment type="catalytic activity">
    <molecule>Protease 2A</molecule>
    <reaction evidence="2">
        <text>Selective cleavage of Tyr-|-Gly bond in the picornavirus polyprotein.</text>
        <dbReference type="EC" id="3.4.22.29"/>
    </reaction>
</comment>
<comment type="catalytic activity">
    <molecule>RNA-directed RNA polymerase</molecule>
    <reaction evidence="10">
        <text>RNA(n) + a ribonucleoside 5'-triphosphate = RNA(n+1) + diphosphate</text>
        <dbReference type="Rhea" id="RHEA:21248"/>
        <dbReference type="Rhea" id="RHEA-COMP:14527"/>
        <dbReference type="Rhea" id="RHEA-COMP:17342"/>
        <dbReference type="ChEBI" id="CHEBI:33019"/>
        <dbReference type="ChEBI" id="CHEBI:61557"/>
        <dbReference type="ChEBI" id="CHEBI:140395"/>
        <dbReference type="EC" id="2.7.7.48"/>
    </reaction>
</comment>
<comment type="catalytic activity">
    <molecule>Protease 3C</molecule>
    <reaction evidence="12">
        <text>Selective cleavage of Gln-|-Gly bond in the poliovirus polyprotein. In other picornavirus reactions Glu may be substituted for Gln, and Ser or Thr for Gly.</text>
        <dbReference type="EC" id="3.4.22.28"/>
    </reaction>
</comment>
<comment type="cofactor">
    <molecule>RNA-directed RNA polymerase</molecule>
    <cofactor evidence="2">
        <name>Mg(2+)</name>
        <dbReference type="ChEBI" id="CHEBI:18420"/>
    </cofactor>
    <text evidence="2 5">Binds 2 magnesium ions that constitute a dinuclear catalytic metal center (By similarity). The magnesium ions are not prebound but only present for catalysis (By similarity). Requires the presence of 3CDpro or 3CPro (By similarity).</text>
</comment>
<comment type="activity regulation">
    <molecule>RNA-directed RNA polymerase</molecule>
    <text evidence="2">Replication or transcription is subject to high level of random mutations by the nucleotide analog ribavirin.</text>
</comment>
<comment type="subunit">
    <molecule>Capsid protein VP0</molecule>
    <text evidence="2">Interacts with capsid protein VP1 and capsid protein VP3 to form heterotrimeric protomers.</text>
</comment>
<comment type="subunit">
    <molecule>Capsid protein VP1</molecule>
    <text evidence="2">Interacts with capsid protein VP0, and capsid protein VP3 to form heterotrimeric protomers (By similarity). Five protomers subsequently associate to form pentamers which serve as building blocks for the capsid (By similarity). Interacts with capsid protein VP2, capsid protein VP3 and capsid protein VP4 following cleavage of capsid protein VP0 (By similarity).</text>
</comment>
<comment type="subunit">
    <molecule>Capsid protein VP2</molecule>
    <text evidence="2">Interacts with capsid protein VP1 and capsid protein VP3 in the mature capsid.</text>
</comment>
<comment type="subunit">
    <molecule>Capsid protein VP3</molecule>
    <text evidence="2">Interacts with capsid protein VP0 and capsid protein VP1 to form heterotrimeric protomers (By similarity). Five protomers subsequently associate to form pentamers which serve as building blocks for the capsid (By similarity). Interacts with capsid protein VP4 in the mature capsid (By similarity). Interacts with protein 2C; this interaction may be important for virion morphogenesis (By similarity).</text>
</comment>
<comment type="subunit">
    <molecule>Capsid protein VP4</molecule>
    <text evidence="2">Interacts with capsid protein VP1 and capsid protein VP3.</text>
</comment>
<comment type="subunit">
    <molecule>Protease 2A</molecule>
    <text evidence="6">Homodimer.</text>
</comment>
<comment type="subunit">
    <molecule>Protein 2C</molecule>
    <text evidence="2">Homohexamer; forms a hexameric ring structure with 6-fold symmetry characteristic of AAA+ ATPases (By similarity). Interacts (via N-terminus) with host RTN3 (via reticulon domain); this interaction is important for viral replication (By similarity). Interacts with capsid protein VP3; this interaction may be important for virion morphogenesis (By similarity).</text>
</comment>
<comment type="subunit">
    <molecule>Protein 3AB</molecule>
    <text evidence="2">Interacts with protein 3CD.</text>
</comment>
<comment type="subunit">
    <molecule>Protein 3A</molecule>
    <text evidence="2">Homodimer (By similarity). Interacts with host GBF1 (By similarity). Interacts (via GOLD domain) with host ACBD3 (via GOLD domain); this interaction allows the formation of a viral protein 3A/ACBD3 heterotetramer with a 2:2 stoichiometry, which will stimulate the recruitment of host PI4KB in order to synthesize PI4P at the viral RNA replication sites (By similarity).</text>
</comment>
<comment type="subunit">
    <molecule>Viral protein genome-linked</molecule>
    <text evidence="2">Interacts with RNA-directed RNA polymerase.</text>
</comment>
<comment type="subunit">
    <molecule>Protein 3CD</molecule>
    <text evidence="2">Interacts with protein 3AB and with RNA-directed RNA polymerase.</text>
</comment>
<comment type="subunit">
    <molecule>RNA-directed RNA polymerase</molecule>
    <text evidence="2">Interacts with Viral protein genome-linked and with protein 3CD.</text>
</comment>
<comment type="subcellular location">
    <molecule>Capsid protein VP0</molecule>
    <subcellularLocation>
        <location>Virion</location>
    </subcellularLocation>
    <subcellularLocation>
        <location evidence="13">Host cytoplasm</location>
    </subcellularLocation>
</comment>
<comment type="subcellular location">
    <molecule>Capsid protein VP4</molecule>
    <subcellularLocation>
        <location>Virion</location>
    </subcellularLocation>
</comment>
<comment type="subcellular location">
    <molecule>Capsid protein VP2</molecule>
    <subcellularLocation>
        <location evidence="2">Virion</location>
    </subcellularLocation>
    <subcellularLocation>
        <location evidence="13">Host cytoplasm</location>
    </subcellularLocation>
</comment>
<comment type="subcellular location">
    <molecule>Capsid protein VP3</molecule>
    <subcellularLocation>
        <location evidence="2">Virion</location>
    </subcellularLocation>
    <subcellularLocation>
        <location evidence="13">Host cytoplasm</location>
    </subcellularLocation>
</comment>
<comment type="subcellular location">
    <molecule>Capsid protein VP1</molecule>
    <subcellularLocation>
        <location evidence="2">Virion</location>
    </subcellularLocation>
    <subcellularLocation>
        <location evidence="13">Host cytoplasm</location>
    </subcellularLocation>
</comment>
<comment type="subcellular location">
    <molecule>Protein 2B</molecule>
    <subcellularLocation>
        <location evidence="13">Host cytoplasmic vesicle membrane</location>
        <topology evidence="13">Peripheral membrane protein</topology>
        <orientation evidence="13">Cytoplasmic side</orientation>
    </subcellularLocation>
    <text>Probably localizes to the surface of intracellular membrane vesicles that are induced after virus infection as the site for viral RNA replication. These vesicles are derived from the endoplasmic reticulum.</text>
</comment>
<comment type="subcellular location">
    <molecule>Protein 2C</molecule>
    <subcellularLocation>
        <location evidence="13">Host cytoplasmic vesicle membrane</location>
        <topology evidence="13">Peripheral membrane protein</topology>
        <orientation evidence="13">Cytoplasmic side</orientation>
    </subcellularLocation>
    <text>Probably localizes to the surface of intracellular membrane vesicles that are induced after virus infection as the site for viral RNA replication. These vesicles are derived from the endoplasmic reticulum.</text>
</comment>
<comment type="subcellular location">
    <molecule>Protein 3A</molecule>
    <subcellularLocation>
        <location evidence="13">Host cytoplasmic vesicle membrane</location>
        <topology evidence="13">Peripheral membrane protein</topology>
        <orientation evidence="13">Cytoplasmic side</orientation>
    </subcellularLocation>
    <text>Probably localizes to the surface of intracellular membrane vesicles that are induced after virus infection as the site for viral RNA replication. These vesicles are derived from the endoplasmic reticulum.</text>
</comment>
<comment type="subcellular location">
    <molecule>Protein 3AB</molecule>
    <subcellularLocation>
        <location evidence="13">Host cytoplasmic vesicle membrane</location>
        <topology evidence="13">Peripheral membrane protein</topology>
        <orientation evidence="13">Cytoplasmic side</orientation>
    </subcellularLocation>
    <text>Probably localizes to the surface of intracellular membrane vesicles that are induced after virus infection as the site for viral RNA replication. These vesicles are derived from the endoplasmic reticulum.</text>
</comment>
<comment type="subcellular location">
    <molecule>Viral protein genome-linked</molecule>
    <subcellularLocation>
        <location evidence="2">Virion</location>
    </subcellularLocation>
    <subcellularLocation>
        <location evidence="7">Host cytoplasm</location>
    </subcellularLocation>
</comment>
<comment type="subcellular location">
    <molecule>Protease 3C</molecule>
    <subcellularLocation>
        <location>Host cytoplasm</location>
    </subcellularLocation>
</comment>
<comment type="subcellular location">
    <molecule>Protein 3CD</molecule>
    <subcellularLocation>
        <location evidence="2">Host nucleus</location>
    </subcellularLocation>
    <subcellularLocation>
        <location evidence="2">Host cytoplasm</location>
    </subcellularLocation>
    <subcellularLocation>
        <location evidence="13">Host cytoplasmic vesicle membrane</location>
        <topology evidence="13">Peripheral membrane protein</topology>
        <orientation evidence="13">Cytoplasmic side</orientation>
    </subcellularLocation>
    <text>Probably localizes to the surface of intracellular membrane vesicles that are induced after virus infection as the site for viral RNA replication. These vesicles are derived from the endoplasmic reticulum.</text>
</comment>
<comment type="subcellular location">
    <molecule>RNA-directed RNA polymerase</molecule>
    <subcellularLocation>
        <location evidence="13">Host cytoplasmic vesicle membrane</location>
        <topology evidence="13">Peripheral membrane protein</topology>
        <orientation evidence="13">Cytoplasmic side</orientation>
    </subcellularLocation>
    <text>Probably localizes to the surface of intracellular membrane vesicles that are induced after virus infection as the site for viral RNA replication. These vesicles are derived from the endoplasmic reticulum.</text>
</comment>
<comment type="domain">
    <molecule>Protein 2C</molecule>
    <text evidence="1 2">The N-terminus has membrane-binding (By similarity). The N-terminus also displays RNA-binding properties (By similarity). The N-terminus is involved in oligomerization (By similarity). The central part contains an ATPase domain and a degenerate C4-type zinc-finger with only 3 cysteines (By similarity). The C-terminus is involved in RNA-binding (By similarity). The extreme C-terminus contains a region involved in oligomerization (By similarity).</text>
</comment>
<comment type="PTM">
    <molecule>Genome polyprotein</molecule>
    <text evidence="2">Specific enzymatic cleavages in vivo by the viral proteases yield processing intermediates and the mature proteins.</text>
</comment>
<comment type="PTM">
    <molecule>Capsid protein VP0</molecule>
    <text evidence="2">Myristoylation is required for the formation of pentamers during virus assembly. Further assembly of 12 pentamers and a molecule of genomic RNA generates the provirion.</text>
</comment>
<comment type="PTM">
    <molecule>Capsid protein VP0</molecule>
    <text evidence="2">During virion maturation, immature virions are rendered infectious following cleavage of VP0 into VP4 and VP2. This maturation seems to be an autocatalytic event triggered by the presence of RNA in the capsid and it is followed by a conformational change infectious virion.</text>
</comment>
<comment type="PTM">
    <molecule>Capsid protein VP4</molecule>
    <text evidence="2">Myristoylation is required during RNA encapsidation and formation of the mature virus particle.</text>
</comment>
<comment type="PTM">
    <molecule>Viral protein genome-linked</molecule>
    <text evidence="2">VPg is uridylylated by the polymerase into VPg-pUpU. This acts as a nucleotide-peptide primer for the genomic RNA replication.</text>
</comment>
<comment type="similarity">
    <text evidence="13">Belongs to the picornaviruses polyprotein family.</text>
</comment>
<comment type="online information" name="Virus Particle ExploreR db">
    <link uri="https://viperdb.org/Info_Page.php?VDB=1h8t"/>
    <text>Icosahedral capsid structure</text>
</comment>
<sequence>MGAQVSTQKTGAHETGLNASGSSIIHYTNINYYKDAASNSANRQEFSQDPGKFTEPVKDIMVKSLPALNSPSAEECGYSDRVRSITLGNSTITTQESANVVVGYGRWPEYLKDNEATAEDQPTQPDVATCRFYTLESVTWERDSPGWWWKFPDALKDMGLFGQNMYYHYLGRAGYTLHVQCNASKFHQGCLLVVCVPEAEMGCSQVDGTVNEHGLSEGETAKKFSSTSTNGTNTVQTIVTNAGMGVGVGNLTIYPHQWINLRTNNCATIVMPYINNVPMDNMFRHHNFTLMIIPFVPLDYSSDSSTYVPITVTVAPMCAEYNGLRLSTSLQGLPVMNTPGSNQFLTSDDFQSPSAMPQFDVTPELNIPGEVQNLMEIAEVDSVVPVNNVEGKLDTMEVYRIPVQSGNHQSDQVFGFQVQPGLDSVFKHTLLGEILNYFAHWSGSIKLTFVFCGSAMATGKFLLAYAPPGANAPKNRKDAMLGTHIIWDVGLQSSCVLCVPWISQTHYRLVQQDEYTSAGNVTCWYQTGIVVPAGTPTSCSIMCFVSACNDFSVRLLKDTPFIEQTALLQGDVVEAVENAVARVADTIGSGPSNSQAVPALTAVETGHTSQVTPSDTMQTRHVKNYHSRSESSIENFLSRSACVYMGGYHTTNTDQTKLFASWTISARRMVQMRRKLEIFTYVRFDVEVTFVITSKQDQGSRLGQDMPPLTHQIMYIPPGGPIPKSVTDYAWQTSTNPSIFWTEGNAPPRMSIPFISIGNAYSNFYDGWSHFSQNGVYGYNTLNHMGQIYVRHVNGSSPLPMTSTVRMYFKPKHVKAWVPRPPRLCQYKNASTVNFTPTNVTDKRTSINYIPETVKPDLSNYGAFGYQSGAVYVVNYRVVNRHLATHTDWQNCVWEDYNRDLLISTTTAHGCDVIARCRCSTGVYYCQSKGKHYPVNFEGPGLVEVQESEYYPKRYQSHVLLAAGFSEPGDCGGILRCEHGVIGIVTMGGEGVVGFADVRDLLWLEDDAMEQGVKDYVEQLGNAFGSGFTNQICEQVNLLKESLVGQDSILEKSLKALVKIISALVIVVRNHDDLITVTATLALIGCTSSPWRWLKQKVSQYYGIPMAERQNNGWLKKFTEMTNSCKGMEWISIKIQKFIEWLKVKILPEVREKHEFLNRLKQLPLLESQIATIEQSAPSQSDQEQLFSNVQYFAHYCRKYAPLYASEAKRVFSLEKKMSNYIQFKSKCRIEPVCLLLHGSPGAGKSVATNLIGRSLAEKLNSSVYTLPPDPDHFDGYKQQAVVIVDDLCQNPDGKDVSLFCQMVSSVDFVPPMAALEEKGILFTSLFVLASTNAGSINAPTVSDSRALARRFHFDMNIEVISMYSQNGKINMPMSEKTCDEECCPVNFKRCCPLVCGKAIQFIDRRTQVRYSLDMLVTEMFREYNHRHSVGATLEALFQGPPIYREIKISVAPETPPPPAIADLLKSVDSEAVREYCKEKGWLVPEVNSTLQIEKHVSRAFICLQALTTFVSVAGIIYIIYKLFAGFQGAYTGMPNQKPKVPTLRQAKVQGPAFEFAVAMMKRNSSTVKTEYREFTMLGIYDRWAVLPRHAKPGPTILMNNQEVGVLDAKELVDKDGTNLELTLLKLNRNEKFRDIRGFLAKEEVEANQAVLAINTSKFPNMYIPVGQVTDYGFLNLGGTPTKRMLMSNFPTRAGQCGGVLMSTGKVLGIHVGGNGHQGFSAALLKHYFNDEQGEIEFIESSKDAGFPIINTPSKTKLEPSVFHQVFEGDKEPAVLRNGDPRLKANFEEAIFSKYIGNVNTHVDEYMLEAVDHYAGQLATLDISTEPMRLEDAVYGTEGLEALDLTTSAGYPYVALGIKKRDILSRRTRDLTKLKECMDKYGLNLPMVTYVKDELRSADKVAKGKSRLIEASSLNDSVAMRQTFGNLYRTFHLNPGIVTGSAVGCDPDLFWSKIPVMLDGHLIAFDYSGYDASLSPVWFACLKLLLEKLGYTHKETNYIDYLCNSHHLYRDKHYFERGGMPSGYSGTSMFNSMINNIIIRTLMLKVYKGIDLDQFRMIAYGDDVIASYPWPIDASLLAETGKGYGLIMTPADKGECFNEVTWTNVTFLKRYFRADEQYPFLVHPVMPMKDIHESIRWTKDPKNTQDHVRSLCLLAWHNGEHEYEEFIRKIRSVPVGRCLTLPAFSTLRRKWLDSF</sequence>
<evidence type="ECO:0000250" key="1">
    <source>
        <dbReference type="UniProtKB" id="B9VUU3"/>
    </source>
</evidence>
<evidence type="ECO:0000250" key="2">
    <source>
        <dbReference type="UniProtKB" id="P03300"/>
    </source>
</evidence>
<evidence type="ECO:0000250" key="3">
    <source>
        <dbReference type="UniProtKB" id="P03301"/>
    </source>
</evidence>
<evidence type="ECO:0000250" key="4">
    <source>
        <dbReference type="UniProtKB" id="P03303"/>
    </source>
</evidence>
<evidence type="ECO:0000250" key="5">
    <source>
        <dbReference type="UniProtKB" id="P03313"/>
    </source>
</evidence>
<evidence type="ECO:0000250" key="6">
    <source>
        <dbReference type="UniProtKB" id="P04936"/>
    </source>
</evidence>
<evidence type="ECO:0000250" key="7">
    <source>
        <dbReference type="UniProtKB" id="Q66478"/>
    </source>
</evidence>
<evidence type="ECO:0000250" key="8">
    <source>
        <dbReference type="UniProtKB" id="Q9QF31"/>
    </source>
</evidence>
<evidence type="ECO:0000255" key="9"/>
<evidence type="ECO:0000255" key="10">
    <source>
        <dbReference type="PROSITE-ProRule" id="PRU00539"/>
    </source>
</evidence>
<evidence type="ECO:0000255" key="11">
    <source>
        <dbReference type="PROSITE-ProRule" id="PRU00551"/>
    </source>
</evidence>
<evidence type="ECO:0000255" key="12">
    <source>
        <dbReference type="PROSITE-ProRule" id="PRU01222"/>
    </source>
</evidence>
<evidence type="ECO:0000305" key="13"/>
<accession>P29813</accession>
<accession>Q66785</accession>